<accession>C9JJH3</accession>
<gene>
    <name type="primary">USP17L10</name>
</gene>
<dbReference type="EC" id="3.4.19.12"/>
<dbReference type="EMBL" id="AC108519">
    <property type="status" value="NOT_ANNOTATED_CDS"/>
    <property type="molecule type" value="Genomic_DNA"/>
</dbReference>
<dbReference type="CCDS" id="CCDS59454.1"/>
<dbReference type="RefSeq" id="NP_001243781.1">
    <property type="nucleotide sequence ID" value="NM_001256852.1"/>
</dbReference>
<dbReference type="SMR" id="C9JJH3"/>
<dbReference type="BioGRID" id="938806">
    <property type="interactions" value="1"/>
</dbReference>
<dbReference type="FunCoup" id="C9JJH3">
    <property type="interactions" value="56"/>
</dbReference>
<dbReference type="IntAct" id="C9JJH3">
    <property type="interactions" value="1"/>
</dbReference>
<dbReference type="STRING" id="9606.ENSP00000403760"/>
<dbReference type="MEROPS" id="C19.023"/>
<dbReference type="MEROPS" id="C19.078"/>
<dbReference type="PhosphoSitePlus" id="C9JJH3"/>
<dbReference type="BioMuta" id="USP17L10"/>
<dbReference type="jPOST" id="C9JJH3"/>
<dbReference type="MassIVE" id="C9JJH3"/>
<dbReference type="PaxDb" id="9606-ENSP00000403760"/>
<dbReference type="Antibodypedia" id="78037">
    <property type="antibodies" value="3 antibodies from 1 providers"/>
</dbReference>
<dbReference type="DNASU" id="100287144"/>
<dbReference type="Ensembl" id="ENST00000417945.1">
    <property type="protein sequence ID" value="ENSP00000403760.1"/>
    <property type="gene ID" value="ENSG00000231396.3"/>
</dbReference>
<dbReference type="GeneID" id="100287144"/>
<dbReference type="KEGG" id="hsa:100287144"/>
<dbReference type="MANE-Select" id="ENST00000417945.1">
    <property type="protein sequence ID" value="ENSP00000403760.1"/>
    <property type="RefSeq nucleotide sequence ID" value="NM_001256852.1"/>
    <property type="RefSeq protein sequence ID" value="NP_001243781.1"/>
</dbReference>
<dbReference type="UCSC" id="uc031sdg.1">
    <property type="organism name" value="human"/>
</dbReference>
<dbReference type="AGR" id="HGNC:44438"/>
<dbReference type="CTD" id="100287144"/>
<dbReference type="GeneCards" id="USP17L10"/>
<dbReference type="HGNC" id="HGNC:44438">
    <property type="gene designation" value="USP17L10"/>
</dbReference>
<dbReference type="HPA" id="ENSG00000231396">
    <property type="expression patterns" value="Not detected"/>
</dbReference>
<dbReference type="neXtProt" id="NX_C9JJH3"/>
<dbReference type="VEuPathDB" id="HostDB:ENSG00000231396"/>
<dbReference type="eggNOG" id="KOG1865">
    <property type="taxonomic scope" value="Eukaryota"/>
</dbReference>
<dbReference type="GeneTree" id="ENSGT00940000161948"/>
<dbReference type="InParanoid" id="C9JJH3"/>
<dbReference type="OMA" id="ANYMLFR"/>
<dbReference type="OrthoDB" id="9523253at2759"/>
<dbReference type="PAN-GO" id="C9JJH3">
    <property type="GO annotations" value="6 GO annotations based on evolutionary models"/>
</dbReference>
<dbReference type="PhylomeDB" id="C9JJH3"/>
<dbReference type="TreeFam" id="TF315281"/>
<dbReference type="PathwayCommons" id="C9JJH3"/>
<dbReference type="Reactome" id="R-HSA-5689880">
    <property type="pathway name" value="Ub-specific processing proteases"/>
</dbReference>
<dbReference type="BioGRID-ORCS" id="100287144">
    <property type="hits" value="41 hits in 1029 CRISPR screens"/>
</dbReference>
<dbReference type="GenomeRNAi" id="100287144"/>
<dbReference type="Pharos" id="C9JJH3">
    <property type="development level" value="Tdark"/>
</dbReference>
<dbReference type="PRO" id="PR:C9JJH3"/>
<dbReference type="Proteomes" id="UP000005640">
    <property type="component" value="Chromosome 4"/>
</dbReference>
<dbReference type="RNAct" id="C9JJH3">
    <property type="molecule type" value="protein"/>
</dbReference>
<dbReference type="Bgee" id="ENSG00000231396">
    <property type="expression patterns" value="Expressed in blood"/>
</dbReference>
<dbReference type="GO" id="GO:0005829">
    <property type="term" value="C:cytosol"/>
    <property type="evidence" value="ECO:0000318"/>
    <property type="project" value="GO_Central"/>
</dbReference>
<dbReference type="GO" id="GO:0005783">
    <property type="term" value="C:endoplasmic reticulum"/>
    <property type="evidence" value="ECO:0007669"/>
    <property type="project" value="UniProtKB-SubCell"/>
</dbReference>
<dbReference type="GO" id="GO:0005634">
    <property type="term" value="C:nucleus"/>
    <property type="evidence" value="ECO:0000318"/>
    <property type="project" value="GO_Central"/>
</dbReference>
<dbReference type="GO" id="GO:0004843">
    <property type="term" value="F:cysteine-type deubiquitinase activity"/>
    <property type="evidence" value="ECO:0000318"/>
    <property type="project" value="GO_Central"/>
</dbReference>
<dbReference type="GO" id="GO:0016579">
    <property type="term" value="P:protein deubiquitination"/>
    <property type="evidence" value="ECO:0007669"/>
    <property type="project" value="InterPro"/>
</dbReference>
<dbReference type="GO" id="GO:0006508">
    <property type="term" value="P:proteolysis"/>
    <property type="evidence" value="ECO:0007669"/>
    <property type="project" value="UniProtKB-KW"/>
</dbReference>
<dbReference type="GO" id="GO:0042981">
    <property type="term" value="P:regulation of apoptotic process"/>
    <property type="evidence" value="ECO:0000318"/>
    <property type="project" value="GO_Central"/>
</dbReference>
<dbReference type="GO" id="GO:0031647">
    <property type="term" value="P:regulation of protein stability"/>
    <property type="evidence" value="ECO:0000318"/>
    <property type="project" value="GO_Central"/>
</dbReference>
<dbReference type="CDD" id="cd02661">
    <property type="entry name" value="Peptidase_C19E"/>
    <property type="match status" value="1"/>
</dbReference>
<dbReference type="FunFam" id="3.90.70.10:FF:000070">
    <property type="entry name" value="Ubiquitin carboxyl-terminal hydrolase 17-like protein 17"/>
    <property type="match status" value="1"/>
</dbReference>
<dbReference type="Gene3D" id="3.90.70.10">
    <property type="entry name" value="Cysteine proteinases"/>
    <property type="match status" value="1"/>
</dbReference>
<dbReference type="InterPro" id="IPR038765">
    <property type="entry name" value="Papain-like_cys_pep_sf"/>
</dbReference>
<dbReference type="InterPro" id="IPR050164">
    <property type="entry name" value="Peptidase_C19"/>
</dbReference>
<dbReference type="InterPro" id="IPR001394">
    <property type="entry name" value="Peptidase_C19_UCH"/>
</dbReference>
<dbReference type="InterPro" id="IPR018200">
    <property type="entry name" value="USP_CS"/>
</dbReference>
<dbReference type="InterPro" id="IPR028889">
    <property type="entry name" value="USP_dom"/>
</dbReference>
<dbReference type="PANTHER" id="PTHR24006:SF651">
    <property type="entry name" value="INACTIVE UBIQUITIN CARBOXYL-TERMINAL HYDROLASE 17-LIKE PROTEIN 4-RELATED"/>
    <property type="match status" value="1"/>
</dbReference>
<dbReference type="PANTHER" id="PTHR24006">
    <property type="entry name" value="UBIQUITIN CARBOXYL-TERMINAL HYDROLASE"/>
    <property type="match status" value="1"/>
</dbReference>
<dbReference type="Pfam" id="PF00443">
    <property type="entry name" value="UCH"/>
    <property type="match status" value="1"/>
</dbReference>
<dbReference type="SUPFAM" id="SSF54001">
    <property type="entry name" value="Cysteine proteinases"/>
    <property type="match status" value="1"/>
</dbReference>
<dbReference type="PROSITE" id="PS00972">
    <property type="entry name" value="USP_1"/>
    <property type="match status" value="1"/>
</dbReference>
<dbReference type="PROSITE" id="PS00973">
    <property type="entry name" value="USP_2"/>
    <property type="match status" value="1"/>
</dbReference>
<dbReference type="PROSITE" id="PS50235">
    <property type="entry name" value="USP_3"/>
    <property type="match status" value="1"/>
</dbReference>
<evidence type="ECO:0000250" key="1"/>
<evidence type="ECO:0000255" key="2">
    <source>
        <dbReference type="PROSITE-ProRule" id="PRU10092"/>
    </source>
</evidence>
<evidence type="ECO:0000255" key="3">
    <source>
        <dbReference type="PROSITE-ProRule" id="PRU10093"/>
    </source>
</evidence>
<evidence type="ECO:0000256" key="4">
    <source>
        <dbReference type="SAM" id="MobiDB-lite"/>
    </source>
</evidence>
<evidence type="ECO:0000305" key="5"/>
<sequence length="530" mass="59886">MEDDSLYLGGEWQFNHFSKLTSSRPDAAFAEIQRTSLPEKSPLSCETRVDLCDDLAPVARQLAPREKPPLSSRRPAAVGAGLQNMGNTCYVNASLQCLTYKPPLANYMLFREHSQTCHRHKGCMLCTMQAHITRALHIPGHVIQPSQALAAGFHRGKQEDAHEFLMFTVDAMRKACLPGHKQVDRHSKDTTLIHQIFGGYWRSQIKCLHCHGISDTFDPYLDIALDIQAAQSVQQALEQLVKPEELNGENAYHCGVCLQRAPASKTLTLHNSAKVLILVLKRFPDVTGNKIAKNVQYPECLDMQPYMSQQNTGPLVYVLYAVLVHAGWSCHNGHYSSYVKAQEGQWYKMDDAEVTASSITSVLSQQAYVLFYIQKSEWERHSESVSRGREPRALGVEDTDRRATQGELKRDHPCLQAPELDEHLVERATQESTLDHWKFLQEQNKTKPEFNVRRVEGTVPPDVLVIHQSKYKCRMKNHHPEQQSSLLNLSSTTPTDQESMNTGTLASLRGRTRRSKGKNKHSKRALLVCQ</sequence>
<name>U17LA_HUMAN</name>
<protein>
    <recommendedName>
        <fullName>Ubiquitin carboxyl-terminal hydrolase 17-like protein 10</fullName>
        <ecNumber>3.4.19.12</ecNumber>
    </recommendedName>
</protein>
<reference key="1">
    <citation type="journal article" date="2005" name="Nature">
        <title>Generation and annotation of the DNA sequences of human chromosomes 2 and 4.</title>
        <authorList>
            <person name="Hillier L.W."/>
            <person name="Graves T.A."/>
            <person name="Fulton R.S."/>
            <person name="Fulton L.A."/>
            <person name="Pepin K.H."/>
            <person name="Minx P."/>
            <person name="Wagner-McPherson C."/>
            <person name="Layman D."/>
            <person name="Wylie K."/>
            <person name="Sekhon M."/>
            <person name="Becker M.C."/>
            <person name="Fewell G.A."/>
            <person name="Delehaunty K.D."/>
            <person name="Miner T.L."/>
            <person name="Nash W.E."/>
            <person name="Kremitzki C."/>
            <person name="Oddy L."/>
            <person name="Du H."/>
            <person name="Sun H."/>
            <person name="Bradshaw-Cordum H."/>
            <person name="Ali J."/>
            <person name="Carter J."/>
            <person name="Cordes M."/>
            <person name="Harris A."/>
            <person name="Isak A."/>
            <person name="van Brunt A."/>
            <person name="Nguyen C."/>
            <person name="Du F."/>
            <person name="Courtney L."/>
            <person name="Kalicki J."/>
            <person name="Ozersky P."/>
            <person name="Abbott S."/>
            <person name="Armstrong J."/>
            <person name="Belter E.A."/>
            <person name="Caruso L."/>
            <person name="Cedroni M."/>
            <person name="Cotton M."/>
            <person name="Davidson T."/>
            <person name="Desai A."/>
            <person name="Elliott G."/>
            <person name="Erb T."/>
            <person name="Fronick C."/>
            <person name="Gaige T."/>
            <person name="Haakenson W."/>
            <person name="Haglund K."/>
            <person name="Holmes A."/>
            <person name="Harkins R."/>
            <person name="Kim K."/>
            <person name="Kruchowski S.S."/>
            <person name="Strong C.M."/>
            <person name="Grewal N."/>
            <person name="Goyea E."/>
            <person name="Hou S."/>
            <person name="Levy A."/>
            <person name="Martinka S."/>
            <person name="Mead K."/>
            <person name="McLellan M.D."/>
            <person name="Meyer R."/>
            <person name="Randall-Maher J."/>
            <person name="Tomlinson C."/>
            <person name="Dauphin-Kohlberg S."/>
            <person name="Kozlowicz-Reilly A."/>
            <person name="Shah N."/>
            <person name="Swearengen-Shahid S."/>
            <person name="Snider J."/>
            <person name="Strong J.T."/>
            <person name="Thompson J."/>
            <person name="Yoakum M."/>
            <person name="Leonard S."/>
            <person name="Pearman C."/>
            <person name="Trani L."/>
            <person name="Radionenko M."/>
            <person name="Waligorski J.E."/>
            <person name="Wang C."/>
            <person name="Rock S.M."/>
            <person name="Tin-Wollam A.-M."/>
            <person name="Maupin R."/>
            <person name="Latreille P."/>
            <person name="Wendl M.C."/>
            <person name="Yang S.-P."/>
            <person name="Pohl C."/>
            <person name="Wallis J.W."/>
            <person name="Spieth J."/>
            <person name="Bieri T.A."/>
            <person name="Berkowicz N."/>
            <person name="Nelson J.O."/>
            <person name="Osborne J."/>
            <person name="Ding L."/>
            <person name="Meyer R."/>
            <person name="Sabo A."/>
            <person name="Shotland Y."/>
            <person name="Sinha P."/>
            <person name="Wohldmann P.E."/>
            <person name="Cook L.L."/>
            <person name="Hickenbotham M.T."/>
            <person name="Eldred J."/>
            <person name="Williams D."/>
            <person name="Jones T.A."/>
            <person name="She X."/>
            <person name="Ciccarelli F.D."/>
            <person name="Izaurralde E."/>
            <person name="Taylor J."/>
            <person name="Schmutz J."/>
            <person name="Myers R.M."/>
            <person name="Cox D.R."/>
            <person name="Huang X."/>
            <person name="McPherson J.D."/>
            <person name="Mardis E.R."/>
            <person name="Clifton S.W."/>
            <person name="Warren W.C."/>
            <person name="Chinwalla A.T."/>
            <person name="Eddy S.R."/>
            <person name="Marra M.A."/>
            <person name="Ovcharenko I."/>
            <person name="Furey T.S."/>
            <person name="Miller W."/>
            <person name="Eichler E.E."/>
            <person name="Bork P."/>
            <person name="Suyama M."/>
            <person name="Torrents D."/>
            <person name="Waterston R.H."/>
            <person name="Wilson R.K."/>
        </authorList>
    </citation>
    <scope>NUCLEOTIDE SEQUENCE [LARGE SCALE GENOMIC DNA]</scope>
</reference>
<comment type="function">
    <text evidence="1">Deubiquitinating enzyme that removes conjugated ubiquitin from specific proteins to regulate different cellular processes that may include cell proliferation, progression through the cell cycle, apoptosis, cell migration, and the cellular response to viral infection.</text>
</comment>
<comment type="catalytic activity">
    <reaction>
        <text>Thiol-dependent hydrolysis of ester, thioester, amide, peptide and isopeptide bonds formed by the C-terminal Gly of ubiquitin (a 76-residue protein attached to proteins as an intracellular targeting signal).</text>
        <dbReference type="EC" id="3.4.19.12"/>
    </reaction>
</comment>
<comment type="subcellular location">
    <subcellularLocation>
        <location evidence="1">Nucleus</location>
    </subcellularLocation>
    <subcellularLocation>
        <location evidence="1">Endoplasmic reticulum</location>
    </subcellularLocation>
</comment>
<comment type="similarity">
    <text evidence="5">Belongs to the peptidase C19 family. USP17 subfamily.</text>
</comment>
<comment type="caution">
    <text evidence="5">The RS447 megasatellite DNA is a highly polymorphic conserved tandem repetitive sequence which contains a copy of the USP17 gene. It is present with an interindividual variation in copy number, ranging from 20 to 103, and can be found in the genome on chromosome 4 and chromosome 8. The high similarity between the UPS17-like genes makes it impossible to specifically assign data to a particular gene of the family. Oligonucleotides designed in RNAi experiments are for instance not specific for a given UPS17-like gene.</text>
</comment>
<proteinExistence type="inferred from homology"/>
<keyword id="KW-0256">Endoplasmic reticulum</keyword>
<keyword id="KW-0378">Hydrolase</keyword>
<keyword id="KW-0539">Nucleus</keyword>
<keyword id="KW-0645">Protease</keyword>
<keyword id="KW-1185">Reference proteome</keyword>
<keyword id="KW-0788">Thiol protease</keyword>
<keyword id="KW-0833">Ubl conjugation pathway</keyword>
<feature type="chain" id="PRO_0000421086" description="Ubiquitin carboxyl-terminal hydrolase 17-like protein 10">
    <location>
        <begin position="1"/>
        <end position="530"/>
    </location>
</feature>
<feature type="domain" description="USP">
    <location>
        <begin position="80"/>
        <end position="375"/>
    </location>
</feature>
<feature type="region of interest" description="Disordered" evidence="4">
    <location>
        <begin position="382"/>
        <end position="410"/>
    </location>
</feature>
<feature type="region of interest" description="Disordered" evidence="4">
    <location>
        <begin position="477"/>
        <end position="530"/>
    </location>
</feature>
<feature type="compositionally biased region" description="Basic and acidic residues" evidence="4">
    <location>
        <begin position="382"/>
        <end position="392"/>
    </location>
</feature>
<feature type="compositionally biased region" description="Basic and acidic residues" evidence="4">
    <location>
        <begin position="398"/>
        <end position="410"/>
    </location>
</feature>
<feature type="compositionally biased region" description="Low complexity" evidence="4">
    <location>
        <begin position="484"/>
        <end position="495"/>
    </location>
</feature>
<feature type="compositionally biased region" description="Polar residues" evidence="4">
    <location>
        <begin position="496"/>
        <end position="505"/>
    </location>
</feature>
<feature type="compositionally biased region" description="Basic residues" evidence="4">
    <location>
        <begin position="510"/>
        <end position="524"/>
    </location>
</feature>
<feature type="active site" description="Nucleophile" evidence="2 3">
    <location>
        <position position="89"/>
    </location>
</feature>
<feature type="active site" description="Proton acceptor" evidence="2 3">
    <location>
        <position position="334"/>
    </location>
</feature>
<organism>
    <name type="scientific">Homo sapiens</name>
    <name type="common">Human</name>
    <dbReference type="NCBI Taxonomy" id="9606"/>
    <lineage>
        <taxon>Eukaryota</taxon>
        <taxon>Metazoa</taxon>
        <taxon>Chordata</taxon>
        <taxon>Craniata</taxon>
        <taxon>Vertebrata</taxon>
        <taxon>Euteleostomi</taxon>
        <taxon>Mammalia</taxon>
        <taxon>Eutheria</taxon>
        <taxon>Euarchontoglires</taxon>
        <taxon>Primates</taxon>
        <taxon>Haplorrhini</taxon>
        <taxon>Catarrhini</taxon>
        <taxon>Hominidae</taxon>
        <taxon>Homo</taxon>
    </lineage>
</organism>